<dbReference type="EMBL" id="CP001489">
    <property type="protein sequence ID" value="ACO02069.1"/>
    <property type="molecule type" value="Genomic_DNA"/>
</dbReference>
<dbReference type="RefSeq" id="WP_002966386.1">
    <property type="nucleotide sequence ID" value="NC_012442.1"/>
</dbReference>
<dbReference type="SMR" id="C0RKD6"/>
<dbReference type="GeneID" id="97535613"/>
<dbReference type="KEGG" id="bmi:BMEA_B0196"/>
<dbReference type="HOGENOM" id="CLU_132825_1_0_5"/>
<dbReference type="Proteomes" id="UP000001748">
    <property type="component" value="Chromosome II"/>
</dbReference>
<dbReference type="GO" id="GO:0005737">
    <property type="term" value="C:cytoplasm"/>
    <property type="evidence" value="ECO:0007669"/>
    <property type="project" value="UniProtKB-SubCell"/>
</dbReference>
<dbReference type="GO" id="GO:0005524">
    <property type="term" value="F:ATP binding"/>
    <property type="evidence" value="ECO:0007669"/>
    <property type="project" value="InterPro"/>
</dbReference>
<dbReference type="GO" id="GO:0046872">
    <property type="term" value="F:metal ion binding"/>
    <property type="evidence" value="ECO:0007669"/>
    <property type="project" value="TreeGrafter"/>
</dbReference>
<dbReference type="GO" id="GO:0044183">
    <property type="term" value="F:protein folding chaperone"/>
    <property type="evidence" value="ECO:0007669"/>
    <property type="project" value="InterPro"/>
</dbReference>
<dbReference type="GO" id="GO:0051087">
    <property type="term" value="F:protein-folding chaperone binding"/>
    <property type="evidence" value="ECO:0007669"/>
    <property type="project" value="TreeGrafter"/>
</dbReference>
<dbReference type="GO" id="GO:0051082">
    <property type="term" value="F:unfolded protein binding"/>
    <property type="evidence" value="ECO:0007669"/>
    <property type="project" value="TreeGrafter"/>
</dbReference>
<dbReference type="GO" id="GO:0051085">
    <property type="term" value="P:chaperone cofactor-dependent protein refolding"/>
    <property type="evidence" value="ECO:0007669"/>
    <property type="project" value="TreeGrafter"/>
</dbReference>
<dbReference type="CDD" id="cd00320">
    <property type="entry name" value="cpn10"/>
    <property type="match status" value="1"/>
</dbReference>
<dbReference type="FunFam" id="2.30.33.40:FF:000001">
    <property type="entry name" value="10 kDa chaperonin"/>
    <property type="match status" value="1"/>
</dbReference>
<dbReference type="Gene3D" id="2.30.33.40">
    <property type="entry name" value="GroES chaperonin"/>
    <property type="match status" value="1"/>
</dbReference>
<dbReference type="HAMAP" id="MF_00580">
    <property type="entry name" value="CH10"/>
    <property type="match status" value="1"/>
</dbReference>
<dbReference type="InterPro" id="IPR020818">
    <property type="entry name" value="Chaperonin_GroES"/>
</dbReference>
<dbReference type="InterPro" id="IPR037124">
    <property type="entry name" value="Chaperonin_GroES_sf"/>
</dbReference>
<dbReference type="InterPro" id="IPR018369">
    <property type="entry name" value="Chaprnonin_Cpn10_CS"/>
</dbReference>
<dbReference type="InterPro" id="IPR011032">
    <property type="entry name" value="GroES-like_sf"/>
</dbReference>
<dbReference type="NCBIfam" id="NF001527">
    <property type="entry name" value="PRK00364.1-2"/>
    <property type="match status" value="1"/>
</dbReference>
<dbReference type="NCBIfam" id="NF001529">
    <property type="entry name" value="PRK00364.1-5"/>
    <property type="match status" value="1"/>
</dbReference>
<dbReference type="NCBIfam" id="NF001531">
    <property type="entry name" value="PRK00364.2-2"/>
    <property type="match status" value="1"/>
</dbReference>
<dbReference type="NCBIfam" id="NF001533">
    <property type="entry name" value="PRK00364.2-4"/>
    <property type="match status" value="1"/>
</dbReference>
<dbReference type="NCBIfam" id="NF001534">
    <property type="entry name" value="PRK00364.2-5"/>
    <property type="match status" value="1"/>
</dbReference>
<dbReference type="PANTHER" id="PTHR10772">
    <property type="entry name" value="10 KDA HEAT SHOCK PROTEIN"/>
    <property type="match status" value="1"/>
</dbReference>
<dbReference type="PANTHER" id="PTHR10772:SF58">
    <property type="entry name" value="CO-CHAPERONIN GROES"/>
    <property type="match status" value="1"/>
</dbReference>
<dbReference type="Pfam" id="PF00166">
    <property type="entry name" value="Cpn10"/>
    <property type="match status" value="1"/>
</dbReference>
<dbReference type="PRINTS" id="PR00297">
    <property type="entry name" value="CHAPERONIN10"/>
</dbReference>
<dbReference type="SMART" id="SM00883">
    <property type="entry name" value="Cpn10"/>
    <property type="match status" value="1"/>
</dbReference>
<dbReference type="SUPFAM" id="SSF50129">
    <property type="entry name" value="GroES-like"/>
    <property type="match status" value="1"/>
</dbReference>
<dbReference type="PROSITE" id="PS00681">
    <property type="entry name" value="CHAPERONINS_CPN10"/>
    <property type="match status" value="1"/>
</dbReference>
<name>CH10_BRUMB</name>
<gene>
    <name evidence="1" type="primary">groES</name>
    <name evidence="1" type="synonym">groS</name>
    <name type="ordered locus">BMEA_B0196</name>
</gene>
<evidence type="ECO:0000255" key="1">
    <source>
        <dbReference type="HAMAP-Rule" id="MF_00580"/>
    </source>
</evidence>
<feature type="chain" id="PRO_1000146891" description="Co-chaperonin GroES">
    <location>
        <begin position="1"/>
        <end position="98"/>
    </location>
</feature>
<accession>C0RKD6</accession>
<protein>
    <recommendedName>
        <fullName evidence="1">Co-chaperonin GroES</fullName>
    </recommendedName>
    <alternativeName>
        <fullName evidence="1">10 kDa chaperonin</fullName>
    </alternativeName>
    <alternativeName>
        <fullName evidence="1">Chaperonin-10</fullName>
        <shortName evidence="1">Cpn10</shortName>
    </alternativeName>
</protein>
<sequence length="98" mass="10393">MADIKFRPLHDRVVVRRVESEAKTAGGIIIPDTAKEKPQEGEVVAAGAGARDEAGKLVPLDVKAGDRVLFGKWSGTEVKIGGEDLLIMKESDILGIVG</sequence>
<keyword id="KW-0143">Chaperone</keyword>
<keyword id="KW-0963">Cytoplasm</keyword>
<comment type="function">
    <text evidence="1">Together with the chaperonin GroEL, plays an essential role in assisting protein folding. The GroEL-GroES system forms a nano-cage that allows encapsulation of the non-native substrate proteins and provides a physical environment optimized to promote and accelerate protein folding. GroES binds to the apical surface of the GroEL ring, thereby capping the opening of the GroEL channel.</text>
</comment>
<comment type="subunit">
    <text evidence="1">Heptamer of 7 subunits arranged in a ring. Interacts with the chaperonin GroEL.</text>
</comment>
<comment type="subcellular location">
    <subcellularLocation>
        <location evidence="1">Cytoplasm</location>
    </subcellularLocation>
</comment>
<comment type="similarity">
    <text evidence="1">Belongs to the GroES chaperonin family.</text>
</comment>
<proteinExistence type="inferred from homology"/>
<organism>
    <name type="scientific">Brucella melitensis biotype 2 (strain ATCC 23457)</name>
    <dbReference type="NCBI Taxonomy" id="546272"/>
    <lineage>
        <taxon>Bacteria</taxon>
        <taxon>Pseudomonadati</taxon>
        <taxon>Pseudomonadota</taxon>
        <taxon>Alphaproteobacteria</taxon>
        <taxon>Hyphomicrobiales</taxon>
        <taxon>Brucellaceae</taxon>
        <taxon>Brucella/Ochrobactrum group</taxon>
        <taxon>Brucella</taxon>
    </lineage>
</organism>
<reference key="1">
    <citation type="submission" date="2009-03" db="EMBL/GenBank/DDBJ databases">
        <title>Brucella melitensis ATCC 23457 whole genome shotgun sequencing project.</title>
        <authorList>
            <person name="Setubal J.C."/>
            <person name="Boyle S."/>
            <person name="Crasta O.R."/>
            <person name="Gillespie J.J."/>
            <person name="Kenyon R.W."/>
            <person name="Lu J."/>
            <person name="Mane S."/>
            <person name="Nagrani S."/>
            <person name="Shallom J.M."/>
            <person name="Shallom S."/>
            <person name="Shukla M."/>
            <person name="Snyder E.E."/>
            <person name="Sobral B.W."/>
            <person name="Wattam A.R."/>
            <person name="Will R."/>
            <person name="Williams K."/>
            <person name="Yoo H."/>
            <person name="Munk C."/>
            <person name="Tapia R."/>
            <person name="Han C."/>
            <person name="Detter J.C."/>
            <person name="Bruce D."/>
            <person name="Brettin T.S."/>
        </authorList>
    </citation>
    <scope>NUCLEOTIDE SEQUENCE [LARGE SCALE GENOMIC DNA]</scope>
    <source>
        <strain>ATCC 23457</strain>
    </source>
</reference>